<feature type="chain" id="PRO_1000135895" description="2,3-bisphosphoglycerate-independent phosphoglycerate mutase">
    <location>
        <begin position="1"/>
        <end position="516"/>
    </location>
</feature>
<feature type="active site" description="Phosphoserine intermediate" evidence="1">
    <location>
        <position position="63"/>
    </location>
</feature>
<feature type="binding site" evidence="1">
    <location>
        <position position="13"/>
    </location>
    <ligand>
        <name>Mn(2+)</name>
        <dbReference type="ChEBI" id="CHEBI:29035"/>
        <label>2</label>
    </ligand>
</feature>
<feature type="binding site" evidence="1">
    <location>
        <position position="63"/>
    </location>
    <ligand>
        <name>Mn(2+)</name>
        <dbReference type="ChEBI" id="CHEBI:29035"/>
        <label>2</label>
    </ligand>
</feature>
<feature type="binding site" evidence="1">
    <location>
        <position position="124"/>
    </location>
    <ligand>
        <name>substrate</name>
    </ligand>
</feature>
<feature type="binding site" evidence="1">
    <location>
        <begin position="154"/>
        <end position="155"/>
    </location>
    <ligand>
        <name>substrate</name>
    </ligand>
</feature>
<feature type="binding site" evidence="1">
    <location>
        <position position="186"/>
    </location>
    <ligand>
        <name>substrate</name>
    </ligand>
</feature>
<feature type="binding site" evidence="1">
    <location>
        <position position="192"/>
    </location>
    <ligand>
        <name>substrate</name>
    </ligand>
</feature>
<feature type="binding site" evidence="1">
    <location>
        <begin position="262"/>
        <end position="265"/>
    </location>
    <ligand>
        <name>substrate</name>
    </ligand>
</feature>
<feature type="binding site" evidence="1">
    <location>
        <position position="337"/>
    </location>
    <ligand>
        <name>substrate</name>
    </ligand>
</feature>
<feature type="binding site" evidence="1">
    <location>
        <position position="404"/>
    </location>
    <ligand>
        <name>Mn(2+)</name>
        <dbReference type="ChEBI" id="CHEBI:29035"/>
        <label>1</label>
    </ligand>
</feature>
<feature type="binding site" evidence="1">
    <location>
        <position position="408"/>
    </location>
    <ligand>
        <name>Mn(2+)</name>
        <dbReference type="ChEBI" id="CHEBI:29035"/>
        <label>1</label>
    </ligand>
</feature>
<feature type="binding site" evidence="1">
    <location>
        <position position="445"/>
    </location>
    <ligand>
        <name>Mn(2+)</name>
        <dbReference type="ChEBI" id="CHEBI:29035"/>
        <label>2</label>
    </ligand>
</feature>
<feature type="binding site" evidence="1">
    <location>
        <position position="446"/>
    </location>
    <ligand>
        <name>Mn(2+)</name>
        <dbReference type="ChEBI" id="CHEBI:29035"/>
        <label>2</label>
    </ligand>
</feature>
<feature type="binding site" evidence="1">
    <location>
        <position position="464"/>
    </location>
    <ligand>
        <name>Mn(2+)</name>
        <dbReference type="ChEBI" id="CHEBI:29035"/>
        <label>1</label>
    </ligand>
</feature>
<comment type="function">
    <text evidence="1">Catalyzes the interconversion of 2-phosphoglycerate and 3-phosphoglycerate.</text>
</comment>
<comment type="catalytic activity">
    <reaction evidence="1">
        <text>(2R)-2-phosphoglycerate = (2R)-3-phosphoglycerate</text>
        <dbReference type="Rhea" id="RHEA:15901"/>
        <dbReference type="ChEBI" id="CHEBI:58272"/>
        <dbReference type="ChEBI" id="CHEBI:58289"/>
        <dbReference type="EC" id="5.4.2.12"/>
    </reaction>
</comment>
<comment type="cofactor">
    <cofactor evidence="1">
        <name>Mn(2+)</name>
        <dbReference type="ChEBI" id="CHEBI:29035"/>
    </cofactor>
    <text evidence="1">Binds 2 manganese ions per subunit.</text>
</comment>
<comment type="pathway">
    <text evidence="1">Carbohydrate degradation; glycolysis; pyruvate from D-glyceraldehyde 3-phosphate: step 3/5.</text>
</comment>
<comment type="subunit">
    <text evidence="1">Monomer.</text>
</comment>
<comment type="similarity">
    <text evidence="1">Belongs to the BPG-independent phosphoglycerate mutase family.</text>
</comment>
<keyword id="KW-0324">Glycolysis</keyword>
<keyword id="KW-0413">Isomerase</keyword>
<keyword id="KW-0464">Manganese</keyword>
<keyword id="KW-0479">Metal-binding</keyword>
<keyword id="KW-1185">Reference proteome</keyword>
<sequence>MSAKKPVVLLILDGYGYSERTKYNAVYAAQTPVYDNLWKTCPNTLIDTSGMAVGLPAGQMGNSEVGHTTIGAGRVVYQSFTRINKSISDGDFFTNPEYVKAIDSAIANDRAVHILGLLSEGGVHSHQDHLYAMINMAVERGAKQVYLHAFLDGRDTPPRSAEASLQKAQDVFAKLGTGRVASIVGRYFALDRDNRWDRVKTAYDVMVTGEAEFDALTAVDGLKAAYERGENDEFVKATVICGEDEEVATINDGDSVIFMNFRPDRAREITRALIDENFTGFDRGETHPAIAHFVQTTEYASDIKAPIAFPPEDLSNSFGEYIAGLGKTQLRIAETEKYAHVTFFFNGGNEVVYPGEDRILVPSPKVATYDLQPEMSAPEVTDKLVEAIESGKYDAIICNYANCDMVGHSGLFDAAVKAVEAVDVALGRVLAAVKKVDGEALITADHGNVEEMFDEETGQPHTQHSTLPVPFIFVSSRKGKLASGGSLADVAPTILALMDLPQPKEMTGRNLITLEG</sequence>
<evidence type="ECO:0000255" key="1">
    <source>
        <dbReference type="HAMAP-Rule" id="MF_01038"/>
    </source>
</evidence>
<proteinExistence type="inferred from homology"/>
<reference key="1">
    <citation type="journal article" date="2008" name="J. Bacteriol.">
        <title>Insights into plant cell wall degradation from the genome sequence of the soil bacterium Cellvibrio japonicus.</title>
        <authorList>
            <person name="DeBoy R.T."/>
            <person name="Mongodin E.F."/>
            <person name="Fouts D.E."/>
            <person name="Tailford L.E."/>
            <person name="Khouri H."/>
            <person name="Emerson J.B."/>
            <person name="Mohamoud Y."/>
            <person name="Watkins K."/>
            <person name="Henrissat B."/>
            <person name="Gilbert H.J."/>
            <person name="Nelson K.E."/>
        </authorList>
    </citation>
    <scope>NUCLEOTIDE SEQUENCE [LARGE SCALE GENOMIC DNA]</scope>
    <source>
        <strain>Ueda107</strain>
    </source>
</reference>
<dbReference type="EC" id="5.4.2.12" evidence="1"/>
<dbReference type="EMBL" id="CP000934">
    <property type="protein sequence ID" value="ACE83445.1"/>
    <property type="molecule type" value="Genomic_DNA"/>
</dbReference>
<dbReference type="RefSeq" id="WP_012489128.1">
    <property type="nucleotide sequence ID" value="NC_010995.1"/>
</dbReference>
<dbReference type="SMR" id="B3PGV8"/>
<dbReference type="STRING" id="498211.CJA_3553"/>
<dbReference type="KEGG" id="cja:CJA_3553"/>
<dbReference type="eggNOG" id="COG0696">
    <property type="taxonomic scope" value="Bacteria"/>
</dbReference>
<dbReference type="HOGENOM" id="CLU_026099_2_0_6"/>
<dbReference type="OrthoDB" id="9800863at2"/>
<dbReference type="UniPathway" id="UPA00109">
    <property type="reaction ID" value="UER00186"/>
</dbReference>
<dbReference type="Proteomes" id="UP000001036">
    <property type="component" value="Chromosome"/>
</dbReference>
<dbReference type="GO" id="GO:0005829">
    <property type="term" value="C:cytosol"/>
    <property type="evidence" value="ECO:0007669"/>
    <property type="project" value="TreeGrafter"/>
</dbReference>
<dbReference type="GO" id="GO:0030145">
    <property type="term" value="F:manganese ion binding"/>
    <property type="evidence" value="ECO:0007669"/>
    <property type="project" value="UniProtKB-UniRule"/>
</dbReference>
<dbReference type="GO" id="GO:0004619">
    <property type="term" value="F:phosphoglycerate mutase activity"/>
    <property type="evidence" value="ECO:0007669"/>
    <property type="project" value="UniProtKB-EC"/>
</dbReference>
<dbReference type="GO" id="GO:0006007">
    <property type="term" value="P:glucose catabolic process"/>
    <property type="evidence" value="ECO:0007669"/>
    <property type="project" value="InterPro"/>
</dbReference>
<dbReference type="GO" id="GO:0006096">
    <property type="term" value="P:glycolytic process"/>
    <property type="evidence" value="ECO:0007669"/>
    <property type="project" value="UniProtKB-UniRule"/>
</dbReference>
<dbReference type="CDD" id="cd16010">
    <property type="entry name" value="iPGM"/>
    <property type="match status" value="1"/>
</dbReference>
<dbReference type="FunFam" id="3.40.1450.10:FF:000001">
    <property type="entry name" value="2,3-bisphosphoglycerate-independent phosphoglycerate mutase"/>
    <property type="match status" value="1"/>
</dbReference>
<dbReference type="FunFam" id="3.40.720.10:FF:000001">
    <property type="entry name" value="2,3-bisphosphoglycerate-independent phosphoglycerate mutase"/>
    <property type="match status" value="1"/>
</dbReference>
<dbReference type="Gene3D" id="3.40.720.10">
    <property type="entry name" value="Alkaline Phosphatase, subunit A"/>
    <property type="match status" value="1"/>
</dbReference>
<dbReference type="Gene3D" id="3.40.1450.10">
    <property type="entry name" value="BPG-independent phosphoglycerate mutase, domain B"/>
    <property type="match status" value="1"/>
</dbReference>
<dbReference type="HAMAP" id="MF_01038">
    <property type="entry name" value="GpmI"/>
    <property type="match status" value="1"/>
</dbReference>
<dbReference type="InterPro" id="IPR017850">
    <property type="entry name" value="Alkaline_phosphatase_core_sf"/>
</dbReference>
<dbReference type="InterPro" id="IPR011258">
    <property type="entry name" value="BPG-indep_PGM_N"/>
</dbReference>
<dbReference type="InterPro" id="IPR006124">
    <property type="entry name" value="Metalloenzyme"/>
</dbReference>
<dbReference type="InterPro" id="IPR036646">
    <property type="entry name" value="PGAM_B_sf"/>
</dbReference>
<dbReference type="InterPro" id="IPR005995">
    <property type="entry name" value="Pgm_bpd_ind"/>
</dbReference>
<dbReference type="NCBIfam" id="TIGR01307">
    <property type="entry name" value="pgm_bpd_ind"/>
    <property type="match status" value="1"/>
</dbReference>
<dbReference type="PANTHER" id="PTHR31637">
    <property type="entry name" value="2,3-BISPHOSPHOGLYCERATE-INDEPENDENT PHOSPHOGLYCERATE MUTASE"/>
    <property type="match status" value="1"/>
</dbReference>
<dbReference type="PANTHER" id="PTHR31637:SF0">
    <property type="entry name" value="2,3-BISPHOSPHOGLYCERATE-INDEPENDENT PHOSPHOGLYCERATE MUTASE"/>
    <property type="match status" value="1"/>
</dbReference>
<dbReference type="Pfam" id="PF06415">
    <property type="entry name" value="iPGM_N"/>
    <property type="match status" value="1"/>
</dbReference>
<dbReference type="Pfam" id="PF01676">
    <property type="entry name" value="Metalloenzyme"/>
    <property type="match status" value="1"/>
</dbReference>
<dbReference type="PIRSF" id="PIRSF001492">
    <property type="entry name" value="IPGAM"/>
    <property type="match status" value="1"/>
</dbReference>
<dbReference type="SUPFAM" id="SSF64158">
    <property type="entry name" value="2,3-Bisphosphoglycerate-independent phosphoglycerate mutase, substrate-binding domain"/>
    <property type="match status" value="1"/>
</dbReference>
<dbReference type="SUPFAM" id="SSF53649">
    <property type="entry name" value="Alkaline phosphatase-like"/>
    <property type="match status" value="1"/>
</dbReference>
<gene>
    <name evidence="1" type="primary">gpmI</name>
    <name type="ordered locus">CJA_3553</name>
</gene>
<name>GPMI_CELJU</name>
<accession>B3PGV8</accession>
<organism>
    <name type="scientific">Cellvibrio japonicus (strain Ueda107)</name>
    <name type="common">Pseudomonas fluorescens subsp. cellulosa</name>
    <dbReference type="NCBI Taxonomy" id="498211"/>
    <lineage>
        <taxon>Bacteria</taxon>
        <taxon>Pseudomonadati</taxon>
        <taxon>Pseudomonadota</taxon>
        <taxon>Gammaproteobacteria</taxon>
        <taxon>Cellvibrionales</taxon>
        <taxon>Cellvibrionaceae</taxon>
        <taxon>Cellvibrio</taxon>
    </lineage>
</organism>
<protein>
    <recommendedName>
        <fullName evidence="1">2,3-bisphosphoglycerate-independent phosphoglycerate mutase</fullName>
        <shortName evidence="1">BPG-independent PGAM</shortName>
        <shortName evidence="1">Phosphoglyceromutase</shortName>
        <shortName evidence="1">iPGM</shortName>
        <ecNumber evidence="1">5.4.2.12</ecNumber>
    </recommendedName>
</protein>